<sequence length="252" mass="26948">MILAVDIGNTNIVIGLMEGTETVDTYRITTRSNHTSDEYGLMILQFLQLSNSSPDDVQDAIISSVVPKVMHSFISSMIKFLGIDPMIIGPGIKTGMNIRMDDPRSLGADLLADCAGAYTTYGGPVLVIDMGTATTYNYVDEKGAILAGLITTGIGTAAAALASNTAQLPEVQITRPKSILAANTKDAMQAGLYYDCLGGIERTITQFREELDTDFKVVATGGMSRIFDCPLIDIVDPTLIFKGMASIYAKNV</sequence>
<reference key="1">
    <citation type="journal article" date="2009" name="J. Bacteriol.">
        <title>Genome sequence of the probiotic bacterium Bifidobacterium animalis subsp. lactis AD011.</title>
        <authorList>
            <person name="Kim J.F."/>
            <person name="Jeong H."/>
            <person name="Yu D.S."/>
            <person name="Choi S.-H."/>
            <person name="Hur C.-G."/>
            <person name="Park M.-S."/>
            <person name="Yoon S.H."/>
            <person name="Kim D.-W."/>
            <person name="Ji G.E."/>
            <person name="Park H.-S."/>
            <person name="Oh T.K."/>
        </authorList>
    </citation>
    <scope>NUCLEOTIDE SEQUENCE [LARGE SCALE GENOMIC DNA]</scope>
    <source>
        <strain>AD011</strain>
    </source>
</reference>
<accession>B8DTP8</accession>
<keyword id="KW-0067">ATP-binding</keyword>
<keyword id="KW-0173">Coenzyme A biosynthesis</keyword>
<keyword id="KW-0963">Cytoplasm</keyword>
<keyword id="KW-0418">Kinase</keyword>
<keyword id="KW-0479">Metal-binding</keyword>
<keyword id="KW-0547">Nucleotide-binding</keyword>
<keyword id="KW-0630">Potassium</keyword>
<keyword id="KW-1185">Reference proteome</keyword>
<keyword id="KW-0808">Transferase</keyword>
<protein>
    <recommendedName>
        <fullName evidence="1">Type III pantothenate kinase</fullName>
        <ecNumber evidence="1">2.7.1.33</ecNumber>
    </recommendedName>
    <alternativeName>
        <fullName evidence="1">PanK-III</fullName>
    </alternativeName>
    <alternativeName>
        <fullName evidence="1">Pantothenic acid kinase</fullName>
    </alternativeName>
</protein>
<proteinExistence type="inferred from homology"/>
<name>COAX_BIFA0</name>
<organism>
    <name type="scientific">Bifidobacterium animalis subsp. lactis (strain AD011)</name>
    <dbReference type="NCBI Taxonomy" id="442563"/>
    <lineage>
        <taxon>Bacteria</taxon>
        <taxon>Bacillati</taxon>
        <taxon>Actinomycetota</taxon>
        <taxon>Actinomycetes</taxon>
        <taxon>Bifidobacteriales</taxon>
        <taxon>Bifidobacteriaceae</taxon>
        <taxon>Bifidobacterium</taxon>
    </lineage>
</organism>
<gene>
    <name evidence="1" type="primary">coaX</name>
    <name type="ordered locus">BLA_1089</name>
</gene>
<comment type="function">
    <text evidence="1">Catalyzes the phosphorylation of pantothenate (Pan), the first step in CoA biosynthesis.</text>
</comment>
<comment type="catalytic activity">
    <reaction evidence="1">
        <text>(R)-pantothenate + ATP = (R)-4'-phosphopantothenate + ADP + H(+)</text>
        <dbReference type="Rhea" id="RHEA:16373"/>
        <dbReference type="ChEBI" id="CHEBI:10986"/>
        <dbReference type="ChEBI" id="CHEBI:15378"/>
        <dbReference type="ChEBI" id="CHEBI:29032"/>
        <dbReference type="ChEBI" id="CHEBI:30616"/>
        <dbReference type="ChEBI" id="CHEBI:456216"/>
        <dbReference type="EC" id="2.7.1.33"/>
    </reaction>
</comment>
<comment type="cofactor">
    <cofactor evidence="1">
        <name>NH4(+)</name>
        <dbReference type="ChEBI" id="CHEBI:28938"/>
    </cofactor>
    <cofactor evidence="1">
        <name>K(+)</name>
        <dbReference type="ChEBI" id="CHEBI:29103"/>
    </cofactor>
    <text evidence="1">A monovalent cation. Ammonium or potassium.</text>
</comment>
<comment type="pathway">
    <text evidence="1">Cofactor biosynthesis; coenzyme A biosynthesis; CoA from (R)-pantothenate: step 1/5.</text>
</comment>
<comment type="subunit">
    <text evidence="1">Homodimer.</text>
</comment>
<comment type="subcellular location">
    <subcellularLocation>
        <location evidence="1">Cytoplasm</location>
    </subcellularLocation>
</comment>
<comment type="similarity">
    <text evidence="1">Belongs to the type III pantothenate kinase family.</text>
</comment>
<dbReference type="EC" id="2.7.1.33" evidence="1"/>
<dbReference type="EMBL" id="CP001213">
    <property type="protein sequence ID" value="ACL29377.1"/>
    <property type="molecule type" value="Genomic_DNA"/>
</dbReference>
<dbReference type="RefSeq" id="WP_004218800.1">
    <property type="nucleotide sequence ID" value="NC_011835.1"/>
</dbReference>
<dbReference type="SMR" id="B8DTP8"/>
<dbReference type="STRING" id="442563.BLA_1089"/>
<dbReference type="KEGG" id="bla:BLA_1089"/>
<dbReference type="HOGENOM" id="CLU_066627_1_0_11"/>
<dbReference type="UniPathway" id="UPA00241">
    <property type="reaction ID" value="UER00352"/>
</dbReference>
<dbReference type="Proteomes" id="UP000002456">
    <property type="component" value="Chromosome"/>
</dbReference>
<dbReference type="GO" id="GO:0005737">
    <property type="term" value="C:cytoplasm"/>
    <property type="evidence" value="ECO:0007669"/>
    <property type="project" value="UniProtKB-SubCell"/>
</dbReference>
<dbReference type="GO" id="GO:0005524">
    <property type="term" value="F:ATP binding"/>
    <property type="evidence" value="ECO:0007669"/>
    <property type="project" value="UniProtKB-UniRule"/>
</dbReference>
<dbReference type="GO" id="GO:0046872">
    <property type="term" value="F:metal ion binding"/>
    <property type="evidence" value="ECO:0007669"/>
    <property type="project" value="UniProtKB-KW"/>
</dbReference>
<dbReference type="GO" id="GO:0004594">
    <property type="term" value="F:pantothenate kinase activity"/>
    <property type="evidence" value="ECO:0007669"/>
    <property type="project" value="UniProtKB-UniRule"/>
</dbReference>
<dbReference type="GO" id="GO:0015937">
    <property type="term" value="P:coenzyme A biosynthetic process"/>
    <property type="evidence" value="ECO:0007669"/>
    <property type="project" value="UniProtKB-UniRule"/>
</dbReference>
<dbReference type="CDD" id="cd24015">
    <property type="entry name" value="ASKHA_NBD_PanK-III"/>
    <property type="match status" value="1"/>
</dbReference>
<dbReference type="Gene3D" id="3.30.420.40">
    <property type="match status" value="2"/>
</dbReference>
<dbReference type="HAMAP" id="MF_01274">
    <property type="entry name" value="Pantothen_kinase_3"/>
    <property type="match status" value="1"/>
</dbReference>
<dbReference type="InterPro" id="IPR043129">
    <property type="entry name" value="ATPase_NBD"/>
</dbReference>
<dbReference type="InterPro" id="IPR004619">
    <property type="entry name" value="Type_III_PanK"/>
</dbReference>
<dbReference type="NCBIfam" id="TIGR00671">
    <property type="entry name" value="baf"/>
    <property type="match status" value="1"/>
</dbReference>
<dbReference type="NCBIfam" id="NF009846">
    <property type="entry name" value="PRK13318.1-4"/>
    <property type="match status" value="1"/>
</dbReference>
<dbReference type="NCBIfam" id="NF009855">
    <property type="entry name" value="PRK13321.1"/>
    <property type="match status" value="1"/>
</dbReference>
<dbReference type="PANTHER" id="PTHR34265">
    <property type="entry name" value="TYPE III PANTOTHENATE KINASE"/>
    <property type="match status" value="1"/>
</dbReference>
<dbReference type="PANTHER" id="PTHR34265:SF1">
    <property type="entry name" value="TYPE III PANTOTHENATE KINASE"/>
    <property type="match status" value="1"/>
</dbReference>
<dbReference type="Pfam" id="PF03309">
    <property type="entry name" value="Pan_kinase"/>
    <property type="match status" value="1"/>
</dbReference>
<dbReference type="SUPFAM" id="SSF53067">
    <property type="entry name" value="Actin-like ATPase domain"/>
    <property type="match status" value="2"/>
</dbReference>
<feature type="chain" id="PRO_1000165188" description="Type III pantothenate kinase">
    <location>
        <begin position="1"/>
        <end position="252"/>
    </location>
</feature>
<feature type="active site" description="Proton acceptor" evidence="1">
    <location>
        <position position="109"/>
    </location>
</feature>
<feature type="binding site" evidence="1">
    <location>
        <begin position="6"/>
        <end position="13"/>
    </location>
    <ligand>
        <name>ATP</name>
        <dbReference type="ChEBI" id="CHEBI:30616"/>
    </ligand>
</feature>
<feature type="binding site" evidence="1">
    <location>
        <begin position="107"/>
        <end position="110"/>
    </location>
    <ligand>
        <name>substrate</name>
    </ligand>
</feature>
<feature type="binding site" evidence="1">
    <location>
        <position position="129"/>
    </location>
    <ligand>
        <name>K(+)</name>
        <dbReference type="ChEBI" id="CHEBI:29103"/>
    </ligand>
</feature>
<feature type="binding site" evidence="1">
    <location>
        <position position="132"/>
    </location>
    <ligand>
        <name>ATP</name>
        <dbReference type="ChEBI" id="CHEBI:30616"/>
    </ligand>
</feature>
<feature type="binding site" evidence="1">
    <location>
        <position position="184"/>
    </location>
    <ligand>
        <name>substrate</name>
    </ligand>
</feature>
<evidence type="ECO:0000255" key="1">
    <source>
        <dbReference type="HAMAP-Rule" id="MF_01274"/>
    </source>
</evidence>